<name>UFOG_GENTR</name>
<sequence>MSPVSHVAVLAFPFGTHAAPLLTLVNRLAASAPDIIFSFFSTSSSITTIFSPTNLISIGSNIKPYAVWDGSPEGFVFSGNPREPIEYFLNAAPDNFDKAMKKAVEDTGVNISCLLTDAFLWFAADFSEKIGVPWIPVWTAASCSLCLHVYTDEIRSRFAEFDIAEKAEKTIDFIPGLSAISFSDLPEELIMEDSQSIFALTLHNMGLKLHKATAVAVNSFEEIDPIITNHLRSTNQLNILNIGPLQTLSSSIPPEDNECLKWLQTQKESSVVYLSFGTVINPPPNEMAALASTLESRKIPFLWSLRDEARKHLPENFIDRTSTFGKIVSWAPQLHVLENPAIGVFVTHCGWNSTLESIFCRVPVIGRPFFGDQKVNARMVEDVWKIGVGVKGGVFTEDETTRVLELVLFSDKGKEMRQNVGRLKEKAKDAVKANGSSTRNFESLLAAFNKLDS</sequence>
<protein>
    <recommendedName>
        <fullName>Anthocyanidin 3-O-glucosyltransferase</fullName>
        <ecNumber>2.4.1.115</ecNumber>
    </recommendedName>
    <alternativeName>
        <fullName>Flavonol 3-O-glucosyltransferase</fullName>
    </alternativeName>
    <alternativeName>
        <fullName>UDP-glucose flavonoid 3-O-glucosyltransferase</fullName>
    </alternativeName>
</protein>
<accession>Q96493</accession>
<organism>
    <name type="scientific">Gentiana triflora</name>
    <name type="common">Clustered gentian</name>
    <dbReference type="NCBI Taxonomy" id="55190"/>
    <lineage>
        <taxon>Eukaryota</taxon>
        <taxon>Viridiplantae</taxon>
        <taxon>Streptophyta</taxon>
        <taxon>Embryophyta</taxon>
        <taxon>Tracheophyta</taxon>
        <taxon>Spermatophyta</taxon>
        <taxon>Magnoliopsida</taxon>
        <taxon>eudicotyledons</taxon>
        <taxon>Gunneridae</taxon>
        <taxon>Pentapetalae</taxon>
        <taxon>asterids</taxon>
        <taxon>lamiids</taxon>
        <taxon>Gentianales</taxon>
        <taxon>Gentianaceae</taxon>
        <taxon>Gentianeae</taxon>
        <taxon>Gentianinae</taxon>
        <taxon>Gentiana</taxon>
    </lineage>
</organism>
<feature type="chain" id="PRO_0000074141" description="Anthocyanidin 3-O-glucosyltransferase">
    <location>
        <begin position="1"/>
        <end position="453"/>
    </location>
</feature>
<feature type="active site" description="Proton acceptor" evidence="1">
    <location>
        <position position="17"/>
    </location>
</feature>
<feature type="active site" description="Charge relay" evidence="1">
    <location>
        <position position="117"/>
    </location>
</feature>
<feature type="binding site" evidence="2">
    <location>
        <position position="17"/>
    </location>
    <ligand>
        <name>an anthocyanidin</name>
        <dbReference type="ChEBI" id="CHEBI:143576"/>
    </ligand>
</feature>
<feature type="binding site" evidence="1">
    <location>
        <position position="139"/>
    </location>
    <ligand>
        <name>UDP-alpha-D-glucose</name>
        <dbReference type="ChEBI" id="CHEBI:58885"/>
    </ligand>
</feature>
<feature type="binding site" evidence="2">
    <location>
        <position position="148"/>
    </location>
    <ligand>
        <name>an anthocyanidin</name>
        <dbReference type="ChEBI" id="CHEBI:143576"/>
    </ligand>
</feature>
<feature type="binding site" evidence="1">
    <location>
        <position position="331"/>
    </location>
    <ligand>
        <name>UDP-alpha-D-glucose</name>
        <dbReference type="ChEBI" id="CHEBI:58885"/>
    </ligand>
</feature>
<feature type="binding site" evidence="1">
    <location>
        <position position="333"/>
    </location>
    <ligand>
        <name>UDP-alpha-D-glucose</name>
        <dbReference type="ChEBI" id="CHEBI:58885"/>
    </ligand>
</feature>
<feature type="binding site" evidence="1">
    <location>
        <position position="348"/>
    </location>
    <ligand>
        <name>UDP-alpha-D-glucose</name>
        <dbReference type="ChEBI" id="CHEBI:58885"/>
    </ligand>
</feature>
<feature type="binding site" evidence="1">
    <location>
        <position position="351"/>
    </location>
    <ligand>
        <name>UDP-alpha-D-glucose</name>
        <dbReference type="ChEBI" id="CHEBI:58885"/>
    </ligand>
</feature>
<feature type="binding site" evidence="1">
    <location>
        <position position="352"/>
    </location>
    <ligand>
        <name>UDP-alpha-D-glucose</name>
        <dbReference type="ChEBI" id="CHEBI:58885"/>
    </ligand>
</feature>
<feature type="binding site" evidence="1">
    <location>
        <position position="353"/>
    </location>
    <ligand>
        <name>UDP-alpha-D-glucose</name>
        <dbReference type="ChEBI" id="CHEBI:58885"/>
    </ligand>
</feature>
<feature type="binding site" evidence="1">
    <location>
        <position position="356"/>
    </location>
    <ligand>
        <name>UDP-alpha-D-glucose</name>
        <dbReference type="ChEBI" id="CHEBI:58885"/>
    </ligand>
</feature>
<feature type="binding site" evidence="2">
    <location>
        <position position="371"/>
    </location>
    <ligand>
        <name>an anthocyanidin</name>
        <dbReference type="ChEBI" id="CHEBI:143576"/>
    </ligand>
</feature>
<feature type="binding site" evidence="1">
    <location>
        <position position="372"/>
    </location>
    <ligand>
        <name>UDP-alpha-D-glucose</name>
        <dbReference type="ChEBI" id="CHEBI:58885"/>
    </ligand>
</feature>
<feature type="binding site" evidence="1">
    <location>
        <position position="373"/>
    </location>
    <ligand>
        <name>UDP-alpha-D-glucose</name>
        <dbReference type="ChEBI" id="CHEBI:58885"/>
    </ligand>
</feature>
<proteinExistence type="evidence at protein level"/>
<reference key="1">
    <citation type="journal article" date="1996" name="Plant Cell Physiol.">
        <title>Molecular and biochemical characterization of three anthocyanin synthetic enzymes from Gentiana triflora.</title>
        <authorList>
            <person name="Tanaka Y."/>
            <person name="Yonekura K."/>
            <person name="Fukuchi-Mizutani M."/>
            <person name="Fukui Y."/>
            <person name="Fujiwara H."/>
            <person name="Ashikari T."/>
            <person name="Kusumi T."/>
        </authorList>
    </citation>
    <scope>NUCLEOTIDE SEQUENCE [MRNA]</scope>
    <scope>FUNCTION</scope>
    <scope>CATALYTIC ACTIVITY</scope>
    <source>
        <tissue>Petal</tissue>
    </source>
</reference>
<dbReference type="EC" id="2.4.1.115"/>
<dbReference type="EMBL" id="D85186">
    <property type="protein sequence ID" value="BAA12737.1"/>
    <property type="molecule type" value="mRNA"/>
</dbReference>
<dbReference type="SMR" id="Q96493"/>
<dbReference type="CAZy" id="GT1">
    <property type="family name" value="Glycosyltransferase Family 1"/>
</dbReference>
<dbReference type="UniPathway" id="UPA00009"/>
<dbReference type="GO" id="GO:0047213">
    <property type="term" value="F:anthocyanidin 3-O-glucosyltransferase activity"/>
    <property type="evidence" value="ECO:0007669"/>
    <property type="project" value="UniProtKB-EC"/>
</dbReference>
<dbReference type="GO" id="GO:0080043">
    <property type="term" value="F:quercetin 3-O-glucosyltransferase activity"/>
    <property type="evidence" value="ECO:0007669"/>
    <property type="project" value="TreeGrafter"/>
</dbReference>
<dbReference type="GO" id="GO:0080044">
    <property type="term" value="F:quercetin 7-O-glucosyltransferase activity"/>
    <property type="evidence" value="ECO:0007669"/>
    <property type="project" value="TreeGrafter"/>
</dbReference>
<dbReference type="GO" id="GO:0009718">
    <property type="term" value="P:anthocyanin-containing compound biosynthetic process"/>
    <property type="evidence" value="ECO:0007669"/>
    <property type="project" value="UniProtKB-UniPathway"/>
</dbReference>
<dbReference type="CDD" id="cd03784">
    <property type="entry name" value="GT1_Gtf-like"/>
    <property type="match status" value="1"/>
</dbReference>
<dbReference type="FunFam" id="3.40.50.2000:FF:000060">
    <property type="entry name" value="Glycosyltransferase"/>
    <property type="match status" value="1"/>
</dbReference>
<dbReference type="FunFam" id="3.40.50.2000:FF:000129">
    <property type="entry name" value="Glycosyltransferase"/>
    <property type="match status" value="1"/>
</dbReference>
<dbReference type="Gene3D" id="3.40.50.2000">
    <property type="entry name" value="Glycogen Phosphorylase B"/>
    <property type="match status" value="2"/>
</dbReference>
<dbReference type="InterPro" id="IPR002213">
    <property type="entry name" value="UDP_glucos_trans"/>
</dbReference>
<dbReference type="InterPro" id="IPR035595">
    <property type="entry name" value="UDP_glycos_trans_CS"/>
</dbReference>
<dbReference type="PANTHER" id="PTHR11926">
    <property type="entry name" value="GLUCOSYL/GLUCURONOSYL TRANSFERASES"/>
    <property type="match status" value="1"/>
</dbReference>
<dbReference type="PANTHER" id="PTHR11926:SF1560">
    <property type="entry name" value="UDP-GLYCOSYLTRANSFERASE 74E1-RELATED"/>
    <property type="match status" value="1"/>
</dbReference>
<dbReference type="Pfam" id="PF00201">
    <property type="entry name" value="UDPGT"/>
    <property type="match status" value="1"/>
</dbReference>
<dbReference type="SUPFAM" id="SSF53756">
    <property type="entry name" value="UDP-Glycosyltransferase/glycogen phosphorylase"/>
    <property type="match status" value="1"/>
</dbReference>
<dbReference type="PROSITE" id="PS00375">
    <property type="entry name" value="UDPGT"/>
    <property type="match status" value="1"/>
</dbReference>
<keyword id="KW-0328">Glycosyltransferase</keyword>
<keyword id="KW-0808">Transferase</keyword>
<evidence type="ECO:0000250" key="1">
    <source>
        <dbReference type="UniProtKB" id="A0A0A1HA03"/>
    </source>
</evidence>
<evidence type="ECO:0000250" key="2">
    <source>
        <dbReference type="UniProtKB" id="P51094"/>
    </source>
</evidence>
<evidence type="ECO:0000269" key="3">
    <source>
    </source>
</evidence>
<evidence type="ECO:0000305" key="4"/>
<comment type="function">
    <text evidence="3">In the presence of other necessary color factors, this glycosylation reaction allows the accumulation of anthocyanin pigments (PubMed:8819318). Anthocyanidins are the preferred substrates, while flavonols are only a minor substrate in vitro (PubMed:8819318).</text>
</comment>
<comment type="catalytic activity">
    <reaction evidence="3">
        <text>an anthocyanidin + UDP-alpha-D-glucose + H(+) = an anthocyanidin 3-O-beta-D-glucoside + UDP</text>
        <dbReference type="Rhea" id="RHEA:20093"/>
        <dbReference type="ChEBI" id="CHEBI:15378"/>
        <dbReference type="ChEBI" id="CHEBI:16307"/>
        <dbReference type="ChEBI" id="CHEBI:58223"/>
        <dbReference type="ChEBI" id="CHEBI:58885"/>
        <dbReference type="ChEBI" id="CHEBI:143576"/>
        <dbReference type="EC" id="2.4.1.115"/>
    </reaction>
    <physiologicalReaction direction="left-to-right" evidence="3">
        <dbReference type="Rhea" id="RHEA:20094"/>
    </physiologicalReaction>
</comment>
<comment type="catalytic activity">
    <reaction evidence="3">
        <text>delphinidin + UDP-alpha-D-glucose = delphinidin 3-O-beta-D-glucoside + UDP</text>
        <dbReference type="Rhea" id="RHEA:61500"/>
        <dbReference type="ChEBI" id="CHEBI:58223"/>
        <dbReference type="ChEBI" id="CHEBI:58885"/>
        <dbReference type="ChEBI" id="CHEBI:144775"/>
        <dbReference type="ChEBI" id="CHEBI:144776"/>
        <dbReference type="EC" id="2.4.1.115"/>
    </reaction>
    <physiologicalReaction direction="left-to-right" evidence="3">
        <dbReference type="Rhea" id="RHEA:61501"/>
    </physiologicalReaction>
</comment>
<comment type="catalytic activity">
    <reaction evidence="3">
        <text>pelargonidin + UDP-alpha-D-glucose = pelargonidin 3-O-beta-D-glucoside + UDP</text>
        <dbReference type="Rhea" id="RHEA:61504"/>
        <dbReference type="ChEBI" id="CHEBI:58223"/>
        <dbReference type="ChEBI" id="CHEBI:58885"/>
        <dbReference type="ChEBI" id="CHEBI:144777"/>
        <dbReference type="ChEBI" id="CHEBI:144778"/>
        <dbReference type="EC" id="2.4.1.115"/>
    </reaction>
    <physiologicalReaction direction="left-to-right" evidence="3">
        <dbReference type="Rhea" id="RHEA:61505"/>
    </physiologicalReaction>
</comment>
<comment type="catalytic activity">
    <reaction evidence="3">
        <text>cyanidin + UDP-alpha-D-glucose = cyanidin 3-O-beta-D-glucoside + UDP + H(+)</text>
        <dbReference type="Rhea" id="RHEA:60100"/>
        <dbReference type="ChEBI" id="CHEBI:15378"/>
        <dbReference type="ChEBI" id="CHEBI:58223"/>
        <dbReference type="ChEBI" id="CHEBI:58885"/>
        <dbReference type="ChEBI" id="CHEBI:71682"/>
        <dbReference type="ChEBI" id="CHEBI:77857"/>
        <dbReference type="EC" id="2.4.1.115"/>
    </reaction>
    <physiologicalReaction direction="left-to-right" evidence="3">
        <dbReference type="Rhea" id="RHEA:60101"/>
    </physiologicalReaction>
</comment>
<comment type="pathway">
    <text>Pigment biosynthesis; anthocyanin biosynthesis.</text>
</comment>
<comment type="similarity">
    <text evidence="4">Belongs to the UDP-glycosyltransferase family.</text>
</comment>